<reference key="1">
    <citation type="journal article" date="1993" name="Proc. Natl. Acad. Sci. U.S.A.">
        <title>The sluggish-A gene of Drosophila melanogaster is expressed in the nervous system and encodes proline oxidase, a mitochondrial enzyme involved in glutamate biosynthesis.</title>
        <authorList>
            <person name="Hayward D.C."/>
            <person name="Delaney S.J."/>
            <person name="Campbell H.D."/>
            <person name="Ghysen A."/>
            <person name="Benzer S."/>
            <person name="Kasprzak A.B."/>
            <person name="Cotsell J.N."/>
            <person name="Young I.G."/>
            <person name="Miklos G.L.G."/>
        </authorList>
    </citation>
    <scope>NUCLEOTIDE SEQUENCE [MRNA] (ISOFORM A)</scope>
    <scope>FUNCTION</scope>
    <scope>CATALYTIC ACTIVITY</scope>
    <scope>SUBCELLULAR LOCATION</scope>
    <scope>TISSUE SPECIFICITY</scope>
    <scope>DEVELOPMENTAL STAGE</scope>
    <scope>DISRUPTION PHENOTYPE</scope>
    <source>
        <strain>Canton-S</strain>
    </source>
</reference>
<reference key="2">
    <citation type="journal article" date="1998" name="Proc. Natl. Acad. Sci. U.S.A.">
        <title>Data transferability from model organisms to human beings: insights from the functional genomics of the flightless region of Drosophila.</title>
        <authorList>
            <person name="Maleszka R."/>
            <person name="de Couet H.G."/>
            <person name="Miklos G.L.G."/>
        </authorList>
    </citation>
    <scope>NUCLEOTIDE SEQUENCE [GENOMIC DNA] (ISOFORM A)</scope>
    <source>
        <strain>Canton-S</strain>
    </source>
</reference>
<reference key="3">
    <citation type="journal article" date="2000" name="Science">
        <title>The genome sequence of Drosophila melanogaster.</title>
        <authorList>
            <person name="Adams M.D."/>
            <person name="Celniker S.E."/>
            <person name="Holt R.A."/>
            <person name="Evans C.A."/>
            <person name="Gocayne J.D."/>
            <person name="Amanatides P.G."/>
            <person name="Scherer S.E."/>
            <person name="Li P.W."/>
            <person name="Hoskins R.A."/>
            <person name="Galle R.F."/>
            <person name="George R.A."/>
            <person name="Lewis S.E."/>
            <person name="Richards S."/>
            <person name="Ashburner M."/>
            <person name="Henderson S.N."/>
            <person name="Sutton G.G."/>
            <person name="Wortman J.R."/>
            <person name="Yandell M.D."/>
            <person name="Zhang Q."/>
            <person name="Chen L.X."/>
            <person name="Brandon R.C."/>
            <person name="Rogers Y.-H.C."/>
            <person name="Blazej R.G."/>
            <person name="Champe M."/>
            <person name="Pfeiffer B.D."/>
            <person name="Wan K.H."/>
            <person name="Doyle C."/>
            <person name="Baxter E.G."/>
            <person name="Helt G."/>
            <person name="Nelson C.R."/>
            <person name="Miklos G.L.G."/>
            <person name="Abril J.F."/>
            <person name="Agbayani A."/>
            <person name="An H.-J."/>
            <person name="Andrews-Pfannkoch C."/>
            <person name="Baldwin D."/>
            <person name="Ballew R.M."/>
            <person name="Basu A."/>
            <person name="Baxendale J."/>
            <person name="Bayraktaroglu L."/>
            <person name="Beasley E.M."/>
            <person name="Beeson K.Y."/>
            <person name="Benos P.V."/>
            <person name="Berman B.P."/>
            <person name="Bhandari D."/>
            <person name="Bolshakov S."/>
            <person name="Borkova D."/>
            <person name="Botchan M.R."/>
            <person name="Bouck J."/>
            <person name="Brokstein P."/>
            <person name="Brottier P."/>
            <person name="Burtis K.C."/>
            <person name="Busam D.A."/>
            <person name="Butler H."/>
            <person name="Cadieu E."/>
            <person name="Center A."/>
            <person name="Chandra I."/>
            <person name="Cherry J.M."/>
            <person name="Cawley S."/>
            <person name="Dahlke C."/>
            <person name="Davenport L.B."/>
            <person name="Davies P."/>
            <person name="de Pablos B."/>
            <person name="Delcher A."/>
            <person name="Deng Z."/>
            <person name="Mays A.D."/>
            <person name="Dew I."/>
            <person name="Dietz S.M."/>
            <person name="Dodson K."/>
            <person name="Doup L.E."/>
            <person name="Downes M."/>
            <person name="Dugan-Rocha S."/>
            <person name="Dunkov B.C."/>
            <person name="Dunn P."/>
            <person name="Durbin K.J."/>
            <person name="Evangelista C.C."/>
            <person name="Ferraz C."/>
            <person name="Ferriera S."/>
            <person name="Fleischmann W."/>
            <person name="Fosler C."/>
            <person name="Gabrielian A.E."/>
            <person name="Garg N.S."/>
            <person name="Gelbart W.M."/>
            <person name="Glasser K."/>
            <person name="Glodek A."/>
            <person name="Gong F."/>
            <person name="Gorrell J.H."/>
            <person name="Gu Z."/>
            <person name="Guan P."/>
            <person name="Harris M."/>
            <person name="Harris N.L."/>
            <person name="Harvey D.A."/>
            <person name="Heiman T.J."/>
            <person name="Hernandez J.R."/>
            <person name="Houck J."/>
            <person name="Hostin D."/>
            <person name="Houston K.A."/>
            <person name="Howland T.J."/>
            <person name="Wei M.-H."/>
            <person name="Ibegwam C."/>
            <person name="Jalali M."/>
            <person name="Kalush F."/>
            <person name="Karpen G.H."/>
            <person name="Ke Z."/>
            <person name="Kennison J.A."/>
            <person name="Ketchum K.A."/>
            <person name="Kimmel B.E."/>
            <person name="Kodira C.D."/>
            <person name="Kraft C.L."/>
            <person name="Kravitz S."/>
            <person name="Kulp D."/>
            <person name="Lai Z."/>
            <person name="Lasko P."/>
            <person name="Lei Y."/>
            <person name="Levitsky A.A."/>
            <person name="Li J.H."/>
            <person name="Li Z."/>
            <person name="Liang Y."/>
            <person name="Lin X."/>
            <person name="Liu X."/>
            <person name="Mattei B."/>
            <person name="McIntosh T.C."/>
            <person name="McLeod M.P."/>
            <person name="McPherson D."/>
            <person name="Merkulov G."/>
            <person name="Milshina N.V."/>
            <person name="Mobarry C."/>
            <person name="Morris J."/>
            <person name="Moshrefi A."/>
            <person name="Mount S.M."/>
            <person name="Moy M."/>
            <person name="Murphy B."/>
            <person name="Murphy L."/>
            <person name="Muzny D.M."/>
            <person name="Nelson D.L."/>
            <person name="Nelson D.R."/>
            <person name="Nelson K.A."/>
            <person name="Nixon K."/>
            <person name="Nusskern D.R."/>
            <person name="Pacleb J.M."/>
            <person name="Palazzolo M."/>
            <person name="Pittman G.S."/>
            <person name="Pan S."/>
            <person name="Pollard J."/>
            <person name="Puri V."/>
            <person name="Reese M.G."/>
            <person name="Reinert K."/>
            <person name="Remington K."/>
            <person name="Saunders R.D.C."/>
            <person name="Scheeler F."/>
            <person name="Shen H."/>
            <person name="Shue B.C."/>
            <person name="Siden-Kiamos I."/>
            <person name="Simpson M."/>
            <person name="Skupski M.P."/>
            <person name="Smith T.J."/>
            <person name="Spier E."/>
            <person name="Spradling A.C."/>
            <person name="Stapleton M."/>
            <person name="Strong R."/>
            <person name="Sun E."/>
            <person name="Svirskas R."/>
            <person name="Tector C."/>
            <person name="Turner R."/>
            <person name="Venter E."/>
            <person name="Wang A.H."/>
            <person name="Wang X."/>
            <person name="Wang Z.-Y."/>
            <person name="Wassarman D.A."/>
            <person name="Weinstock G.M."/>
            <person name="Weissenbach J."/>
            <person name="Williams S.M."/>
            <person name="Woodage T."/>
            <person name="Worley K.C."/>
            <person name="Wu D."/>
            <person name="Yang S."/>
            <person name="Yao Q.A."/>
            <person name="Ye J."/>
            <person name="Yeh R.-F."/>
            <person name="Zaveri J.S."/>
            <person name="Zhan M."/>
            <person name="Zhang G."/>
            <person name="Zhao Q."/>
            <person name="Zheng L."/>
            <person name="Zheng X.H."/>
            <person name="Zhong F.N."/>
            <person name="Zhong W."/>
            <person name="Zhou X."/>
            <person name="Zhu S.C."/>
            <person name="Zhu X."/>
            <person name="Smith H.O."/>
            <person name="Gibbs R.A."/>
            <person name="Myers E.W."/>
            <person name="Rubin G.M."/>
            <person name="Venter J.C."/>
        </authorList>
    </citation>
    <scope>NUCLEOTIDE SEQUENCE [LARGE SCALE GENOMIC DNA]</scope>
    <source>
        <strain>Berkeley</strain>
    </source>
</reference>
<reference key="4">
    <citation type="journal article" date="2002" name="Genome Biol.">
        <title>Annotation of the Drosophila melanogaster euchromatic genome: a systematic review.</title>
        <authorList>
            <person name="Misra S."/>
            <person name="Crosby M.A."/>
            <person name="Mungall C.J."/>
            <person name="Matthews B.B."/>
            <person name="Campbell K.S."/>
            <person name="Hradecky P."/>
            <person name="Huang Y."/>
            <person name="Kaminker J.S."/>
            <person name="Millburn G.H."/>
            <person name="Prochnik S.E."/>
            <person name="Smith C.D."/>
            <person name="Tupy J.L."/>
            <person name="Whitfield E.J."/>
            <person name="Bayraktaroglu L."/>
            <person name="Berman B.P."/>
            <person name="Bettencourt B.R."/>
            <person name="Celniker S.E."/>
            <person name="de Grey A.D.N.J."/>
            <person name="Drysdale R.A."/>
            <person name="Harris N.L."/>
            <person name="Richter J."/>
            <person name="Russo S."/>
            <person name="Schroeder A.J."/>
            <person name="Shu S.Q."/>
            <person name="Stapleton M."/>
            <person name="Yamada C."/>
            <person name="Ashburner M."/>
            <person name="Gelbart W.M."/>
            <person name="Rubin G.M."/>
            <person name="Lewis S.E."/>
        </authorList>
    </citation>
    <scope>GENOME REANNOTATION</scope>
    <scope>ALTERNATIVE SPLICING</scope>
    <source>
        <strain>Berkeley</strain>
    </source>
</reference>
<reference key="5">
    <citation type="journal article" date="2002" name="Genome Biol.">
        <title>A Drosophila full-length cDNA resource.</title>
        <authorList>
            <person name="Stapleton M."/>
            <person name="Carlson J.W."/>
            <person name="Brokstein P."/>
            <person name="Yu C."/>
            <person name="Champe M."/>
            <person name="George R.A."/>
            <person name="Guarin H."/>
            <person name="Kronmiller B."/>
            <person name="Pacleb J.M."/>
            <person name="Park S."/>
            <person name="Wan K.H."/>
            <person name="Rubin G.M."/>
            <person name="Celniker S.E."/>
        </authorList>
    </citation>
    <scope>NUCLEOTIDE SEQUENCE [LARGE SCALE MRNA] (ISOFORM A)</scope>
    <source>
        <strain>Berkeley</strain>
        <tissue>Embryo</tissue>
    </source>
</reference>
<comment type="function">
    <text evidence="3 5">Converts proline to delta-1-pyrroline-5-carboxylate (PubMed:8096642). Involved in the conversion of proline to glutamate, which functions as a transmitter at neuromuscular junctions (PubMed:8096642). Glutamate deficiency could possibly account for reduced motor activity (PubMed:8096642).</text>
</comment>
<comment type="catalytic activity">
    <reaction evidence="7">
        <text>L-proline + a quinone = (S)-1-pyrroline-5-carboxylate + a quinol + H(+)</text>
        <dbReference type="Rhea" id="RHEA:23784"/>
        <dbReference type="ChEBI" id="CHEBI:15378"/>
        <dbReference type="ChEBI" id="CHEBI:17388"/>
        <dbReference type="ChEBI" id="CHEBI:24646"/>
        <dbReference type="ChEBI" id="CHEBI:60039"/>
        <dbReference type="ChEBI" id="CHEBI:132124"/>
        <dbReference type="EC" id="1.5.5.2"/>
    </reaction>
    <physiologicalReaction direction="left-to-right" evidence="7">
        <dbReference type="Rhea" id="RHEA:23785"/>
    </physiologicalReaction>
</comment>
<comment type="cofactor">
    <cofactor>
        <name>FAD</name>
        <dbReference type="ChEBI" id="CHEBI:57692"/>
    </cofactor>
</comment>
<comment type="pathway">
    <text>Amino-acid degradation; L-proline degradation into L-glutamate; L-glutamate from L-proline: step 1/2.</text>
</comment>
<comment type="subcellular location">
    <subcellularLocation>
        <location evidence="3">Mitochondrion matrix</location>
    </subcellularLocation>
</comment>
<comment type="alternative products">
    <event type="alternative splicing"/>
    <isoform>
        <id>Q04499-1</id>
        <name>D</name>
        <sequence type="displayed"/>
    </isoform>
    <isoform>
        <id>Q04499-2</id>
        <name>A</name>
        <name>F</name>
        <sequence type="described" ref="VSP_015401 VSP_015402"/>
    </isoform>
    <isoform>
        <id>Q04499-3</id>
        <name>B</name>
        <sequence type="described" ref="VSP_015402"/>
    </isoform>
    <isoform>
        <id>Q04499-4</id>
        <name>C</name>
        <sequence type="described" ref="VSP_015400"/>
    </isoform>
    <isoform>
        <id>Q04499-5</id>
        <name>E</name>
        <sequence type="described" ref="VSP_015401"/>
    </isoform>
</comment>
<comment type="tissue specificity">
    <text evidence="3">Most abundant in developing nervous system.</text>
</comment>
<comment type="developmental stage">
    <text evidence="3">Expressed in developing embryo as well as in adult.</text>
</comment>
<comment type="disruption phenotype">
    <text evidence="3">Flies exhibit reduced proline oxidase activity which produces sluggish behavior.</text>
</comment>
<comment type="similarity">
    <text evidence="6">Belongs to the proline oxidase family.</text>
</comment>
<gene>
    <name type="primary">slgA</name>
    <name type="synonym">slg</name>
    <name type="ORF">CG1417</name>
</gene>
<sequence length="681" mass="77153">MALLRSLSAQRTAISLVYGRNSSKSSNSVAVAACRSFHQRGSGSTSIAGEGAASESTRGVNGARFLHSGDRPLQASTLVQPEVVSSETVKRSMKQESSQEKNPSPAGSPQRDPLDVSFNDPIAAFKSKTTGELIRAYLVYMICSSEKLVEHNMTLMKLARNLLGQKLFVLLMKSSFYGHFVAGENRHTIVPALERLRSFGVKPILDYSVEEDITQEEAEKREVESSVSSAGDKKEEGSMPQYHVDKSFADRRYKVSSARTYFYLNEATCERNMEIFIKCLEAVSDDDRKAPRAVATGATFGTGITAIKLTALGRPQLLLQLSEVIMRTRKYMEDMVGGQGNVLTHHKTIKDLEKYYATLGDNKDVKEFLNNVTSDKEGILHLFPWSGIVDEDSQLSDTFRVPDPQTGQMRRLISQIPPKEEEMFRNMIRRLNTIVKAAADLDVRIMVDAEQTYFQPAISRITLEMMRKYNKDKAIVFNTYQCYLRETFREVNTDLEQAKRQNFYFGAKLVRGAYMDQERDRAKSLGYPDPVNPTFEATTDMYHRTLSECLRRIKLMKDCDDDARKIGIMVASHNEDTVRFAIQQMKEIGISPEDKVICFGQLLGMCDYITFPLGQAGYSAYKYIPYGPVEEVLPYLSRRAQENKGVLKKIKKEKRLLLSEIRRRLMRGQLFYKPKGNYVPI</sequence>
<proteinExistence type="evidence at protein level"/>
<name>PROD_DROME</name>
<accession>Q04499</accession>
<accession>O61349</accession>
<accession>Q8IQ45</accession>
<accession>Q8IQ46</accession>
<accession>Q8T0C7</accession>
<accession>Q9VRH7</accession>
<accession>Q9VRH8</accession>
<accession>Q9VRH9</accession>
<accession>Q9VRI2</accession>
<organism>
    <name type="scientific">Drosophila melanogaster</name>
    <name type="common">Fruit fly</name>
    <dbReference type="NCBI Taxonomy" id="7227"/>
    <lineage>
        <taxon>Eukaryota</taxon>
        <taxon>Metazoa</taxon>
        <taxon>Ecdysozoa</taxon>
        <taxon>Arthropoda</taxon>
        <taxon>Hexapoda</taxon>
        <taxon>Insecta</taxon>
        <taxon>Pterygota</taxon>
        <taxon>Neoptera</taxon>
        <taxon>Endopterygota</taxon>
        <taxon>Diptera</taxon>
        <taxon>Brachycera</taxon>
        <taxon>Muscomorpha</taxon>
        <taxon>Ephydroidea</taxon>
        <taxon>Drosophilidae</taxon>
        <taxon>Drosophila</taxon>
        <taxon>Sophophora</taxon>
    </lineage>
</organism>
<dbReference type="EC" id="1.5.5.2" evidence="7"/>
<dbReference type="EMBL" id="L07330">
    <property type="protein sequence ID" value="AAA02748.1"/>
    <property type="molecule type" value="mRNA"/>
</dbReference>
<dbReference type="EMBL" id="AF017777">
    <property type="protein sequence ID" value="AAC28410.1"/>
    <property type="molecule type" value="Genomic_DNA"/>
</dbReference>
<dbReference type="EMBL" id="AE014298">
    <property type="protein sequence ID" value="AAF50814.2"/>
    <property type="molecule type" value="Genomic_DNA"/>
</dbReference>
<dbReference type="EMBL" id="AE014298">
    <property type="protein sequence ID" value="AAF50819.2"/>
    <property type="molecule type" value="Genomic_DNA"/>
</dbReference>
<dbReference type="EMBL" id="AE014298">
    <property type="protein sequence ID" value="AAF50820.2"/>
    <property type="molecule type" value="Genomic_DNA"/>
</dbReference>
<dbReference type="EMBL" id="AE014298">
    <property type="protein sequence ID" value="AAF50821.1"/>
    <property type="molecule type" value="Genomic_DNA"/>
</dbReference>
<dbReference type="EMBL" id="AE014298">
    <property type="protein sequence ID" value="AAF50822.3"/>
    <property type="molecule type" value="Genomic_DNA"/>
</dbReference>
<dbReference type="EMBL" id="AY069407">
    <property type="protein sequence ID" value="AAL39552.1"/>
    <property type="molecule type" value="mRNA"/>
</dbReference>
<dbReference type="PIR" id="A47302">
    <property type="entry name" value="A47302"/>
</dbReference>
<dbReference type="RefSeq" id="NP_001245791.1">
    <molecule id="Q04499-3"/>
    <property type="nucleotide sequence ID" value="NM_001258862.2"/>
</dbReference>
<dbReference type="RefSeq" id="NP_001245792.1">
    <molecule id="Q04499-2"/>
    <property type="nucleotide sequence ID" value="NM_001258863.2"/>
</dbReference>
<dbReference type="RefSeq" id="NP_001245793.1">
    <molecule id="Q04499-2"/>
    <property type="nucleotide sequence ID" value="NM_001258864.2"/>
</dbReference>
<dbReference type="RefSeq" id="NP_001245794.1">
    <molecule id="Q04499-2"/>
    <property type="nucleotide sequence ID" value="NM_001258865.2"/>
</dbReference>
<dbReference type="RefSeq" id="NP_001245795.1">
    <molecule id="Q04499-3"/>
    <property type="nucleotide sequence ID" value="NM_001258866.2"/>
</dbReference>
<dbReference type="RefSeq" id="NP_001245796.1">
    <molecule id="Q04499-5"/>
    <property type="nucleotide sequence ID" value="NM_001258867.2"/>
</dbReference>
<dbReference type="RefSeq" id="NP_523433.2">
    <molecule id="Q04499-5"/>
    <property type="nucleotide sequence ID" value="NM_078709.4"/>
</dbReference>
<dbReference type="RefSeq" id="NP_728422.1">
    <molecule id="Q04499-2"/>
    <property type="nucleotide sequence ID" value="NM_167751.3"/>
</dbReference>
<dbReference type="RefSeq" id="NP_728423.1">
    <molecule id="Q04499-1"/>
    <property type="nucleotide sequence ID" value="NM_167752.3"/>
</dbReference>
<dbReference type="RefSeq" id="NP_728424.1">
    <molecule id="Q04499-3"/>
    <property type="nucleotide sequence ID" value="NM_167753.3"/>
</dbReference>
<dbReference type="RefSeq" id="NP_728425.1">
    <molecule id="Q04499-4"/>
    <property type="nucleotide sequence ID" value="NM_167754.2"/>
</dbReference>
<dbReference type="RefSeq" id="NP_996526.1">
    <molecule id="Q04499-2"/>
    <property type="nucleotide sequence ID" value="NM_206803.3"/>
</dbReference>
<dbReference type="RefSeq" id="NP_996527.1">
    <molecule id="Q04499-2"/>
    <property type="nucleotide sequence ID" value="NM_206804.3"/>
</dbReference>
<dbReference type="RefSeq" id="NP_996528.1">
    <molecule id="Q04499-2"/>
    <property type="nucleotide sequence ID" value="NM_206805.3"/>
</dbReference>
<dbReference type="BioGRID" id="59392">
    <property type="interactions" value="20"/>
</dbReference>
<dbReference type="FunCoup" id="Q04499">
    <property type="interactions" value="572"/>
</dbReference>
<dbReference type="IntAct" id="Q04499">
    <property type="interactions" value="5"/>
</dbReference>
<dbReference type="STRING" id="7227.FBpp0076903"/>
<dbReference type="PaxDb" id="7227-FBpp0076903"/>
<dbReference type="DNASU" id="33117"/>
<dbReference type="EnsemblMetazoa" id="FBtr0077203">
    <molecule id="Q04499-2"/>
    <property type="protein sequence ID" value="FBpp0076902"/>
    <property type="gene ID" value="FBgn0003423"/>
</dbReference>
<dbReference type="EnsemblMetazoa" id="FBtr0077204">
    <molecule id="Q04499-1"/>
    <property type="protein sequence ID" value="FBpp0076903"/>
    <property type="gene ID" value="FBgn0003423"/>
</dbReference>
<dbReference type="EnsemblMetazoa" id="FBtr0077205">
    <molecule id="Q04499-5"/>
    <property type="protein sequence ID" value="FBpp0076904"/>
    <property type="gene ID" value="FBgn0003423"/>
</dbReference>
<dbReference type="EnsemblMetazoa" id="FBtr0077206">
    <molecule id="Q04499-3"/>
    <property type="protein sequence ID" value="FBpp0076905"/>
    <property type="gene ID" value="FBgn0003423"/>
</dbReference>
<dbReference type="EnsemblMetazoa" id="FBtr0077207">
    <molecule id="Q04499-4"/>
    <property type="protein sequence ID" value="FBpp0076906"/>
    <property type="gene ID" value="FBgn0003423"/>
</dbReference>
<dbReference type="EnsemblMetazoa" id="FBtr0077208">
    <molecule id="Q04499-2"/>
    <property type="protein sequence ID" value="FBpp0089304"/>
    <property type="gene ID" value="FBgn0003423"/>
</dbReference>
<dbReference type="EnsemblMetazoa" id="FBtr0077209">
    <molecule id="Q04499-2"/>
    <property type="protein sequence ID" value="FBpp0089305"/>
    <property type="gene ID" value="FBgn0003423"/>
</dbReference>
<dbReference type="EnsemblMetazoa" id="FBtr0077210">
    <molecule id="Q04499-2"/>
    <property type="protein sequence ID" value="FBpp0089306"/>
    <property type="gene ID" value="FBgn0003423"/>
</dbReference>
<dbReference type="EnsemblMetazoa" id="FBtr0307524">
    <molecule id="Q04499-3"/>
    <property type="protein sequence ID" value="FBpp0300179"/>
    <property type="gene ID" value="FBgn0003423"/>
</dbReference>
<dbReference type="EnsemblMetazoa" id="FBtr0307525">
    <molecule id="Q04499-2"/>
    <property type="protein sequence ID" value="FBpp0300180"/>
    <property type="gene ID" value="FBgn0003423"/>
</dbReference>
<dbReference type="EnsemblMetazoa" id="FBtr0307526">
    <molecule id="Q04499-2"/>
    <property type="protein sequence ID" value="FBpp0300181"/>
    <property type="gene ID" value="FBgn0003423"/>
</dbReference>
<dbReference type="EnsemblMetazoa" id="FBtr0307527">
    <molecule id="Q04499-2"/>
    <property type="protein sequence ID" value="FBpp0300182"/>
    <property type="gene ID" value="FBgn0003423"/>
</dbReference>
<dbReference type="EnsemblMetazoa" id="FBtr0307528">
    <molecule id="Q04499-3"/>
    <property type="protein sequence ID" value="FBpp0300183"/>
    <property type="gene ID" value="FBgn0003423"/>
</dbReference>
<dbReference type="EnsemblMetazoa" id="FBtr0307529">
    <molecule id="Q04499-5"/>
    <property type="protein sequence ID" value="FBpp0300184"/>
    <property type="gene ID" value="FBgn0003423"/>
</dbReference>
<dbReference type="GeneID" id="33117"/>
<dbReference type="KEGG" id="dme:Dmel_CG1417"/>
<dbReference type="AGR" id="FB:FBgn0003423"/>
<dbReference type="CTD" id="33117"/>
<dbReference type="FlyBase" id="FBgn0003423">
    <property type="gene designation" value="slgA"/>
</dbReference>
<dbReference type="VEuPathDB" id="VectorBase:FBgn0003423"/>
<dbReference type="eggNOG" id="KOG0186">
    <property type="taxonomic scope" value="Eukaryota"/>
</dbReference>
<dbReference type="GeneTree" id="ENSGT00390000006265"/>
<dbReference type="InParanoid" id="Q04499"/>
<dbReference type="OMA" id="GPLKKYH"/>
<dbReference type="OrthoDB" id="5464at2759"/>
<dbReference type="PhylomeDB" id="Q04499"/>
<dbReference type="Reactome" id="R-DME-389661">
    <property type="pathway name" value="Glyoxylate metabolism and glycine degradation"/>
</dbReference>
<dbReference type="Reactome" id="R-DME-70688">
    <property type="pathway name" value="Proline catabolism"/>
</dbReference>
<dbReference type="UniPathway" id="UPA00261">
    <property type="reaction ID" value="UER00373"/>
</dbReference>
<dbReference type="BioGRID-ORCS" id="33117">
    <property type="hits" value="0 hits in 3 CRISPR screens"/>
</dbReference>
<dbReference type="GenomeRNAi" id="33117"/>
<dbReference type="PRO" id="PR:Q04499"/>
<dbReference type="Proteomes" id="UP000000803">
    <property type="component" value="Chromosome X"/>
</dbReference>
<dbReference type="Bgee" id="FBgn0003423">
    <property type="expression patterns" value="Expressed in medullary tangential neuron Mt1 (Drosophila) in brain and 249 other cell types or tissues"/>
</dbReference>
<dbReference type="ExpressionAtlas" id="Q04499">
    <property type="expression patterns" value="baseline and differential"/>
</dbReference>
<dbReference type="GO" id="GO:0005759">
    <property type="term" value="C:mitochondrial matrix"/>
    <property type="evidence" value="ECO:0007669"/>
    <property type="project" value="UniProtKB-SubCell"/>
</dbReference>
<dbReference type="GO" id="GO:0005739">
    <property type="term" value="C:mitochondrion"/>
    <property type="evidence" value="ECO:0000314"/>
    <property type="project" value="FlyBase"/>
</dbReference>
<dbReference type="GO" id="GO:0071949">
    <property type="term" value="F:FAD binding"/>
    <property type="evidence" value="ECO:0000250"/>
    <property type="project" value="UniProtKB"/>
</dbReference>
<dbReference type="GO" id="GO:0004657">
    <property type="term" value="F:proline dehydrogenase activity"/>
    <property type="evidence" value="ECO:0000315"/>
    <property type="project" value="FlyBase"/>
</dbReference>
<dbReference type="GO" id="GO:0002118">
    <property type="term" value="P:aggressive behavior"/>
    <property type="evidence" value="ECO:0000315"/>
    <property type="project" value="FlyBase"/>
</dbReference>
<dbReference type="GO" id="GO:0007626">
    <property type="term" value="P:locomotory behavior"/>
    <property type="evidence" value="ECO:0000315"/>
    <property type="project" value="FlyBase"/>
</dbReference>
<dbReference type="GO" id="GO:0042331">
    <property type="term" value="P:phototaxis"/>
    <property type="evidence" value="ECO:0000315"/>
    <property type="project" value="FlyBase"/>
</dbReference>
<dbReference type="GO" id="GO:0006562">
    <property type="term" value="P:proline catabolic process"/>
    <property type="evidence" value="ECO:0000315"/>
    <property type="project" value="FlyBase"/>
</dbReference>
<dbReference type="GO" id="GO:0010133">
    <property type="term" value="P:proline catabolic process to glutamate"/>
    <property type="evidence" value="ECO:0000318"/>
    <property type="project" value="GO_Central"/>
</dbReference>
<dbReference type="FunFam" id="3.20.20.220:FF:000029">
    <property type="entry name" value="Proline dehydrogenase"/>
    <property type="match status" value="1"/>
</dbReference>
<dbReference type="Gene3D" id="3.20.20.220">
    <property type="match status" value="2"/>
</dbReference>
<dbReference type="InterPro" id="IPR029041">
    <property type="entry name" value="FAD-linked_oxidoreductase-like"/>
</dbReference>
<dbReference type="InterPro" id="IPR002872">
    <property type="entry name" value="Proline_DH_dom"/>
</dbReference>
<dbReference type="InterPro" id="IPR015659">
    <property type="entry name" value="Proline_oxidase"/>
</dbReference>
<dbReference type="PANTHER" id="PTHR13914:SF0">
    <property type="entry name" value="PROLINE DEHYDROGENASE 1, MITOCHONDRIAL"/>
    <property type="match status" value="1"/>
</dbReference>
<dbReference type="PANTHER" id="PTHR13914">
    <property type="entry name" value="PROLINE OXIDASE"/>
    <property type="match status" value="1"/>
</dbReference>
<dbReference type="Pfam" id="PF01619">
    <property type="entry name" value="Pro_dh"/>
    <property type="match status" value="1"/>
</dbReference>
<dbReference type="SUPFAM" id="SSF51730">
    <property type="entry name" value="FAD-linked oxidoreductase"/>
    <property type="match status" value="1"/>
</dbReference>
<evidence type="ECO:0000255" key="1"/>
<evidence type="ECO:0000256" key="2">
    <source>
        <dbReference type="SAM" id="MobiDB-lite"/>
    </source>
</evidence>
<evidence type="ECO:0000269" key="3">
    <source>
    </source>
</evidence>
<evidence type="ECO:0000303" key="4">
    <source>
    </source>
</evidence>
<evidence type="ECO:0000303" key="5">
    <source>
    </source>
</evidence>
<evidence type="ECO:0000305" key="6"/>
<evidence type="ECO:0000305" key="7">
    <source>
    </source>
</evidence>
<protein>
    <recommendedName>
        <fullName>Proline dehydrogenase 1, mitochondrial</fullName>
        <ecNumber evidence="7">1.5.5.2</ecNumber>
    </recommendedName>
    <alternativeName>
        <fullName evidence="5">Proline oxidase</fullName>
    </alternativeName>
    <alternativeName>
        <fullName>Protein sluggish-A</fullName>
    </alternativeName>
</protein>
<feature type="transit peptide" description="Mitochondrion" evidence="1">
    <location>
        <begin position="1"/>
        <end position="30"/>
    </location>
</feature>
<feature type="chain" id="PRO_0000025803" description="Proline dehydrogenase 1, mitochondrial">
    <location>
        <begin position="31"/>
        <end position="681"/>
    </location>
</feature>
<feature type="region of interest" description="Disordered" evidence="2">
    <location>
        <begin position="76"/>
        <end position="113"/>
    </location>
</feature>
<feature type="region of interest" description="Disordered" evidence="2">
    <location>
        <begin position="216"/>
        <end position="239"/>
    </location>
</feature>
<feature type="compositionally biased region" description="Polar residues" evidence="2">
    <location>
        <begin position="76"/>
        <end position="87"/>
    </location>
</feature>
<feature type="compositionally biased region" description="Basic and acidic residues" evidence="2">
    <location>
        <begin position="88"/>
        <end position="99"/>
    </location>
</feature>
<feature type="splice variant" id="VSP_015400" description="In isoform C." evidence="6">
    <location>
        <begin position="1"/>
        <end position="325"/>
    </location>
</feature>
<feature type="splice variant" id="VSP_015401" description="In isoform A and isoform E." evidence="4 5">
    <original>LARNLLGQKLFVLLMKSSFYGHFVAGENRHTIVPA</original>
    <variation>WSKNVLGQRLFTLLMKATFYGHFVAGEDQIKIIPT</variation>
    <location>
        <begin position="158"/>
        <end position="192"/>
    </location>
</feature>
<feature type="splice variant" id="VSP_015402" description="In isoform A and isoform B." evidence="4 5">
    <location>
        <begin position="285"/>
        <end position="296"/>
    </location>
</feature>
<feature type="sequence conflict" description="In Ref. 1; AAA02748." evidence="6" ref="1">
    <original>S</original>
    <variation>N</variation>
    <location>
        <position position="42"/>
    </location>
</feature>
<feature type="sequence conflict" description="In Ref. 1; AAA02748." evidence="6" ref="1">
    <original>K</original>
    <variation>N</variation>
    <location>
        <position position="147"/>
    </location>
</feature>
<feature type="sequence conflict" description="In Ref. 2; AAC28410." evidence="6" ref="2">
    <original>V</original>
    <variation>F</variation>
    <location>
        <position position="149"/>
    </location>
</feature>
<keyword id="KW-0025">Alternative splicing</keyword>
<keyword id="KW-0274">FAD</keyword>
<keyword id="KW-0285">Flavoprotein</keyword>
<keyword id="KW-0496">Mitochondrion</keyword>
<keyword id="KW-0560">Oxidoreductase</keyword>
<keyword id="KW-0642">Proline metabolism</keyword>
<keyword id="KW-1185">Reference proteome</keyword>
<keyword id="KW-0809">Transit peptide</keyword>